<comment type="function">
    <text evidence="2">Catalyzes uridine to pseudouridine isomerization (pseudouridylation) of different mitochondrial RNA substrates. Acts on position 1397 in 16S mitochondrial ribosomal RNA (16S mt-rRNA). This modification is required for the assembly of 16S mt-rRNA into a functional mitochondrial ribosome. As a component of a functional protein-RNA module, consisting of RCC1L, NGRN, RPUSD3, RPUSD4, TRUB2, FASTKD2 and 16S mt-rRNA, controls 16S mt-rRNA abundance and is required for intra-mitochondrial translation. Acts on position 39 in mitochondrial tRNA(Phe). Also catalyzes pseudouridylation of mRNAs in nucleus: acts as a regulator of pre-mRNA splicing by mediating pseudouridylation of pre-mRNAs at locations associated with alternatively spliced regions. Pseudouridylation of pre-mRNAs near splice sites directly regulates mRNA splicing and mRNA 3'-end processing.</text>
</comment>
<comment type="catalytic activity">
    <reaction evidence="2">
        <text>uridine in 5S rRNA = pseudouridine in 5S rRNA</text>
        <dbReference type="Rhea" id="RHEA:47036"/>
        <dbReference type="Rhea" id="RHEA-COMP:11730"/>
        <dbReference type="Rhea" id="RHEA-COMP:11731"/>
        <dbReference type="ChEBI" id="CHEBI:65314"/>
        <dbReference type="ChEBI" id="CHEBI:65315"/>
    </reaction>
</comment>
<comment type="catalytic activity">
    <reaction evidence="2">
        <text>a uridine in tRNA = a pseudouridine in tRNA</text>
        <dbReference type="Rhea" id="RHEA:54572"/>
        <dbReference type="Rhea" id="RHEA-COMP:13339"/>
        <dbReference type="Rhea" id="RHEA-COMP:13934"/>
        <dbReference type="ChEBI" id="CHEBI:65314"/>
        <dbReference type="ChEBI" id="CHEBI:65315"/>
    </reaction>
</comment>
<comment type="catalytic activity">
    <reaction evidence="2">
        <text>a uridine in mRNA = a pseudouridine in mRNA</text>
        <dbReference type="Rhea" id="RHEA:56644"/>
        <dbReference type="Rhea" id="RHEA-COMP:14658"/>
        <dbReference type="Rhea" id="RHEA-COMP:14659"/>
        <dbReference type="ChEBI" id="CHEBI:65314"/>
        <dbReference type="ChEBI" id="CHEBI:65315"/>
    </reaction>
</comment>
<comment type="subunit">
    <text evidence="2">Interacts with 16S mt-rRNA, mt-tRNA(Phe) and mt-tRNA(Met). Forms a regulatory protein-RNA complex, consisting of RCC1L, NGRN, RPUSD3, RPUSD4, TRUB2, FASTKD2 and 16S mt-rRNA.</text>
</comment>
<comment type="subcellular location">
    <subcellularLocation>
        <location evidence="2">Mitochondrion matrix</location>
    </subcellularLocation>
    <subcellularLocation>
        <location evidence="2">Nucleus</location>
    </subcellularLocation>
    <subcellularLocation>
        <location evidence="2">Cytoplasm</location>
    </subcellularLocation>
    <text evidence="2">Mainly localizes to mitochondrion. Localizes to mitochondrial RNA granules, platforms for post-transcriptional RNA modification and ribosome assembly. Also found in nucleus and cytoplasm.</text>
</comment>
<comment type="similarity">
    <text evidence="4">Belongs to the pseudouridine synthase RluA family.</text>
</comment>
<evidence type="ECO:0000250" key="1">
    <source>
        <dbReference type="UniProtKB" id="P0AA39"/>
    </source>
</evidence>
<evidence type="ECO:0000250" key="2">
    <source>
        <dbReference type="UniProtKB" id="Q96CM3"/>
    </source>
</evidence>
<evidence type="ECO:0000255" key="3"/>
<evidence type="ECO:0000305" key="4"/>
<evidence type="ECO:0000312" key="5">
    <source>
        <dbReference type="RGD" id="1311268"/>
    </source>
</evidence>
<keyword id="KW-0963">Cytoplasm</keyword>
<keyword id="KW-0413">Isomerase</keyword>
<keyword id="KW-0496">Mitochondrion</keyword>
<keyword id="KW-0507">mRNA processing</keyword>
<keyword id="KW-0508">mRNA splicing</keyword>
<keyword id="KW-0539">Nucleus</keyword>
<keyword id="KW-1185">Reference proteome</keyword>
<keyword id="KW-0698">rRNA processing</keyword>
<keyword id="KW-0809">Transit peptide</keyword>
<keyword id="KW-0819">tRNA processing</keyword>
<sequence length="377" mass="42595">MAAPLLGSPGLQVLSMSSRTGKLFTPSSRSFCSRATSSRPLNAQRLAEKLRAQKQEQKTKEMRVPTNPVQRRVQELVRFTQQLQRVHPNVLAKELSRRILHQDKDLVVINKPYGLPVHGGPGVQLCISDVLPILAKMLHGHKAEPLHLCHRLDKETTGVMVLAWEKDMAHQVQELFRTRQVEKKYWAITVRVPLPSAGVVDIPIMEKEVAGQQQHHKMTLRPSYRMDNGKMVKVRASRDAHVAVTQYQVLSSTPSSALVELQPVTGIKHQLRVHLAFGLDCPILGDHKYSDWNRLAPQKLSAGTLKKLGLQQSKARYIPLHLHARQLILPALGSRTEELLLACKLPHFFARSLRRLGLDMPNEDQSRSHEARHVEAR</sequence>
<organism>
    <name type="scientific">Rattus norvegicus</name>
    <name type="common">Rat</name>
    <dbReference type="NCBI Taxonomy" id="10116"/>
    <lineage>
        <taxon>Eukaryota</taxon>
        <taxon>Metazoa</taxon>
        <taxon>Chordata</taxon>
        <taxon>Craniata</taxon>
        <taxon>Vertebrata</taxon>
        <taxon>Euteleostomi</taxon>
        <taxon>Mammalia</taxon>
        <taxon>Eutheria</taxon>
        <taxon>Euarchontoglires</taxon>
        <taxon>Glires</taxon>
        <taxon>Rodentia</taxon>
        <taxon>Myomorpha</taxon>
        <taxon>Muroidea</taxon>
        <taxon>Muridae</taxon>
        <taxon>Murinae</taxon>
        <taxon>Rattus</taxon>
    </lineage>
</organism>
<reference key="1">
    <citation type="journal article" date="2004" name="Genome Res.">
        <title>The status, quality, and expansion of the NIH full-length cDNA project: the Mammalian Gene Collection (MGC).</title>
        <authorList>
            <consortium name="The MGC Project Team"/>
        </authorList>
    </citation>
    <scope>NUCLEOTIDE SEQUENCE [LARGE SCALE MRNA]</scope>
    <source>
        <tissue>Testis</tissue>
    </source>
</reference>
<proteinExistence type="evidence at transcript level"/>
<gene>
    <name evidence="5" type="primary">Rpusd4</name>
</gene>
<dbReference type="EC" id="5.4.99.-" evidence="2"/>
<dbReference type="EMBL" id="BC098023">
    <property type="protein sequence ID" value="AAH98023.1"/>
    <property type="molecule type" value="mRNA"/>
</dbReference>
<dbReference type="RefSeq" id="NP_001020455.1">
    <property type="nucleotide sequence ID" value="NM_001025284.1"/>
</dbReference>
<dbReference type="SMR" id="Q4QQT0"/>
<dbReference type="FunCoup" id="Q4QQT0">
    <property type="interactions" value="1186"/>
</dbReference>
<dbReference type="STRING" id="10116.ENSRNOP00000015670"/>
<dbReference type="PhosphoSitePlus" id="Q4QQT0"/>
<dbReference type="PaxDb" id="10116-ENSRNOP00000015670"/>
<dbReference type="Ensembl" id="ENSRNOT00000015670.7">
    <property type="protein sequence ID" value="ENSRNOP00000015670.4"/>
    <property type="gene ID" value="ENSRNOG00000011567.7"/>
</dbReference>
<dbReference type="GeneID" id="315550"/>
<dbReference type="KEGG" id="rno:315550"/>
<dbReference type="UCSC" id="RGD:1311268">
    <property type="organism name" value="rat"/>
</dbReference>
<dbReference type="AGR" id="RGD:1311268"/>
<dbReference type="CTD" id="84881"/>
<dbReference type="RGD" id="1311268">
    <property type="gene designation" value="Rpusd4"/>
</dbReference>
<dbReference type="eggNOG" id="KOG1919">
    <property type="taxonomic scope" value="Eukaryota"/>
</dbReference>
<dbReference type="GeneTree" id="ENSGT00940000158436"/>
<dbReference type="HOGENOM" id="CLU_016902_2_1_1"/>
<dbReference type="InParanoid" id="Q4QQT0"/>
<dbReference type="OMA" id="AKKYWAI"/>
<dbReference type="OrthoDB" id="428658at2759"/>
<dbReference type="PhylomeDB" id="Q4QQT0"/>
<dbReference type="TreeFam" id="TF337899"/>
<dbReference type="PRO" id="PR:Q4QQT0"/>
<dbReference type="Proteomes" id="UP000002494">
    <property type="component" value="Chromosome 8"/>
</dbReference>
<dbReference type="Bgee" id="ENSRNOG00000011567">
    <property type="expression patterns" value="Expressed in quadriceps femoris and 20 other cell types or tissues"/>
</dbReference>
<dbReference type="GO" id="GO:0005759">
    <property type="term" value="C:mitochondrial matrix"/>
    <property type="evidence" value="ECO:0000266"/>
    <property type="project" value="RGD"/>
</dbReference>
<dbReference type="GO" id="GO:0005739">
    <property type="term" value="C:mitochondrion"/>
    <property type="evidence" value="ECO:0000266"/>
    <property type="project" value="RGD"/>
</dbReference>
<dbReference type="GO" id="GO:0005654">
    <property type="term" value="C:nucleoplasm"/>
    <property type="evidence" value="ECO:0007669"/>
    <property type="project" value="Ensembl"/>
</dbReference>
<dbReference type="GO" id="GO:0035770">
    <property type="term" value="C:ribonucleoprotein granule"/>
    <property type="evidence" value="ECO:0000266"/>
    <property type="project" value="RGD"/>
</dbReference>
<dbReference type="GO" id="GO:1990400">
    <property type="term" value="F:mitochondrial ribosomal large subunit rRNA binding"/>
    <property type="evidence" value="ECO:0000266"/>
    <property type="project" value="RGD"/>
</dbReference>
<dbReference type="GO" id="GO:0009982">
    <property type="term" value="F:pseudouridine synthase activity"/>
    <property type="evidence" value="ECO:0000266"/>
    <property type="project" value="RGD"/>
</dbReference>
<dbReference type="GO" id="GO:0000049">
    <property type="term" value="F:tRNA binding"/>
    <property type="evidence" value="ECO:0000266"/>
    <property type="project" value="RGD"/>
</dbReference>
<dbReference type="GO" id="GO:0106029">
    <property type="term" value="F:tRNA pseudouridine synthase activity"/>
    <property type="evidence" value="ECO:0007669"/>
    <property type="project" value="RHEA"/>
</dbReference>
<dbReference type="GO" id="GO:0070902">
    <property type="term" value="P:mitochondrial tRNA pseudouridine synthesis"/>
    <property type="evidence" value="ECO:0000266"/>
    <property type="project" value="RGD"/>
</dbReference>
<dbReference type="GO" id="GO:0006397">
    <property type="term" value="P:mRNA processing"/>
    <property type="evidence" value="ECO:0007669"/>
    <property type="project" value="UniProtKB-KW"/>
</dbReference>
<dbReference type="GO" id="GO:1990481">
    <property type="term" value="P:mRNA pseudouridine synthesis"/>
    <property type="evidence" value="ECO:0000266"/>
    <property type="project" value="RGD"/>
</dbReference>
<dbReference type="GO" id="GO:0070131">
    <property type="term" value="P:positive regulation of mitochondrial translation"/>
    <property type="evidence" value="ECO:0000250"/>
    <property type="project" value="UniProtKB"/>
</dbReference>
<dbReference type="GO" id="GO:0008380">
    <property type="term" value="P:RNA splicing"/>
    <property type="evidence" value="ECO:0007669"/>
    <property type="project" value="UniProtKB-KW"/>
</dbReference>
<dbReference type="GO" id="GO:0031118">
    <property type="term" value="P:rRNA pseudouridine synthesis"/>
    <property type="evidence" value="ECO:0000266"/>
    <property type="project" value="RGD"/>
</dbReference>
<dbReference type="CDD" id="cd02869">
    <property type="entry name" value="PseudoU_synth_RluA_like"/>
    <property type="match status" value="1"/>
</dbReference>
<dbReference type="FunFam" id="3.30.2350.10:FF:000015">
    <property type="entry name" value="Mitochondrial RNA pseudouridine synthase RPUSD4"/>
    <property type="match status" value="1"/>
</dbReference>
<dbReference type="Gene3D" id="3.30.2350.10">
    <property type="entry name" value="Pseudouridine synthase"/>
    <property type="match status" value="1"/>
</dbReference>
<dbReference type="InterPro" id="IPR020103">
    <property type="entry name" value="PsdUridine_synth_cat_dom_sf"/>
</dbReference>
<dbReference type="InterPro" id="IPR006224">
    <property type="entry name" value="PsdUridine_synth_RluA-like_CS"/>
</dbReference>
<dbReference type="InterPro" id="IPR006145">
    <property type="entry name" value="PsdUridine_synth_RsuA/RluA"/>
</dbReference>
<dbReference type="InterPro" id="IPR050188">
    <property type="entry name" value="RluA_PseudoU_synthase"/>
</dbReference>
<dbReference type="PANTHER" id="PTHR21600">
    <property type="entry name" value="MITOCHONDRIAL RNA PSEUDOURIDINE SYNTHASE"/>
    <property type="match status" value="1"/>
</dbReference>
<dbReference type="PANTHER" id="PTHR21600:SF83">
    <property type="entry name" value="PSEUDOURIDYLATE SYNTHASE RPUSD4, MITOCHONDRIAL"/>
    <property type="match status" value="1"/>
</dbReference>
<dbReference type="Pfam" id="PF00849">
    <property type="entry name" value="PseudoU_synth_2"/>
    <property type="match status" value="1"/>
</dbReference>
<dbReference type="SUPFAM" id="SSF55120">
    <property type="entry name" value="Pseudouridine synthase"/>
    <property type="match status" value="1"/>
</dbReference>
<dbReference type="PROSITE" id="PS01129">
    <property type="entry name" value="PSI_RLU"/>
    <property type="match status" value="1"/>
</dbReference>
<name>RUSD4_RAT</name>
<protein>
    <recommendedName>
        <fullName evidence="4">Pseudouridylate synthase RPUSD4, mitochondrial</fullName>
        <ecNumber evidence="2">5.4.99.-</ecNumber>
    </recommendedName>
    <alternativeName>
        <fullName evidence="4">RNA pseudouridylate synthase domain-containing protein 4</fullName>
    </alternativeName>
</protein>
<feature type="transit peptide" description="Mitochondrion" evidence="3">
    <location>
        <begin position="1"/>
        <end position="35"/>
    </location>
</feature>
<feature type="chain" id="PRO_0000300827" description="Pseudouridylate synthase RPUSD4, mitochondrial">
    <location>
        <begin position="36"/>
        <end position="377"/>
    </location>
</feature>
<feature type="active site" evidence="1">
    <location>
        <position position="153"/>
    </location>
</feature>
<accession>Q4QQT0</accession>